<proteinExistence type="inferred from homology"/>
<sequence>MGARLKEVYSTEIAPALVKRLQLKNVMEVPRVEKVVLNMGLGEAIQNIKVLESAVEELTRICGQKPVVTKAKKSIAQFKLREGMPIGCMVTLRRDKAYEFLDRLINVALPRVRDFKGVSKKGFDGRGNYTLGIREQLIFPEIDLEKVDKVKGLNVTIVTTAKNDEEGYALMEAIGMPFPKKAQD</sequence>
<keyword id="KW-1185">Reference proteome</keyword>
<keyword id="KW-0687">Ribonucleoprotein</keyword>
<keyword id="KW-0689">Ribosomal protein</keyword>
<keyword id="KW-0694">RNA-binding</keyword>
<keyword id="KW-0699">rRNA-binding</keyword>
<keyword id="KW-0820">tRNA-binding</keyword>
<reference key="1">
    <citation type="submission" date="2005-10" db="EMBL/GenBank/DDBJ databases">
        <title>Complete sequence of Pelobacter carbinolicus DSM 2380.</title>
        <authorList>
            <person name="Copeland A."/>
            <person name="Lucas S."/>
            <person name="Lapidus A."/>
            <person name="Barry K."/>
            <person name="Detter J.C."/>
            <person name="Glavina T."/>
            <person name="Hammon N."/>
            <person name="Israni S."/>
            <person name="Pitluck S."/>
            <person name="Chertkov O."/>
            <person name="Schmutz J."/>
            <person name="Larimer F."/>
            <person name="Land M."/>
            <person name="Kyrpides N."/>
            <person name="Ivanova N."/>
            <person name="Richardson P."/>
        </authorList>
    </citation>
    <scope>NUCLEOTIDE SEQUENCE [LARGE SCALE GENOMIC DNA]</scope>
    <source>
        <strain>DSM 2380 / NBRC 103641 / GraBd1</strain>
    </source>
</reference>
<evidence type="ECO:0000255" key="1">
    <source>
        <dbReference type="HAMAP-Rule" id="MF_01333"/>
    </source>
</evidence>
<evidence type="ECO:0000305" key="2"/>
<accession>Q3A6N5</accession>
<protein>
    <recommendedName>
        <fullName evidence="1">Large ribosomal subunit protein uL5</fullName>
    </recommendedName>
    <alternativeName>
        <fullName evidence="2">50S ribosomal protein L5</fullName>
    </alternativeName>
</protein>
<comment type="function">
    <text evidence="1">This is one of the proteins that bind and probably mediate the attachment of the 5S RNA into the large ribosomal subunit, where it forms part of the central protuberance. In the 70S ribosome it contacts protein S13 of the 30S subunit (bridge B1b), connecting the 2 subunits; this bridge is implicated in subunit movement. Contacts the P site tRNA; the 5S rRNA and some of its associated proteins might help stabilize positioning of ribosome-bound tRNAs.</text>
</comment>
<comment type="subunit">
    <text evidence="1">Part of the 50S ribosomal subunit; part of the 5S rRNA/L5/L18/L25 subcomplex. Contacts the 5S rRNA and the P site tRNA. Forms a bridge to the 30S subunit in the 70S ribosome.</text>
</comment>
<comment type="similarity">
    <text evidence="1">Belongs to the universal ribosomal protein uL5 family.</text>
</comment>
<feature type="chain" id="PRO_0000243036" description="Large ribosomal subunit protein uL5">
    <location>
        <begin position="1"/>
        <end position="184"/>
    </location>
</feature>
<name>RL5_SYNC1</name>
<dbReference type="EMBL" id="CP000142">
    <property type="protein sequence ID" value="ABA87972.1"/>
    <property type="molecule type" value="Genomic_DNA"/>
</dbReference>
<dbReference type="RefSeq" id="WP_011340415.1">
    <property type="nucleotide sequence ID" value="NC_007498.2"/>
</dbReference>
<dbReference type="SMR" id="Q3A6N5"/>
<dbReference type="STRING" id="338963.Pcar_0713"/>
<dbReference type="KEGG" id="pca:Pcar_0713"/>
<dbReference type="eggNOG" id="COG0094">
    <property type="taxonomic scope" value="Bacteria"/>
</dbReference>
<dbReference type="HOGENOM" id="CLU_061015_2_1_7"/>
<dbReference type="OrthoDB" id="9806626at2"/>
<dbReference type="Proteomes" id="UP000002534">
    <property type="component" value="Chromosome"/>
</dbReference>
<dbReference type="GO" id="GO:1990904">
    <property type="term" value="C:ribonucleoprotein complex"/>
    <property type="evidence" value="ECO:0007669"/>
    <property type="project" value="UniProtKB-KW"/>
</dbReference>
<dbReference type="GO" id="GO:0005840">
    <property type="term" value="C:ribosome"/>
    <property type="evidence" value="ECO:0007669"/>
    <property type="project" value="UniProtKB-KW"/>
</dbReference>
<dbReference type="GO" id="GO:0019843">
    <property type="term" value="F:rRNA binding"/>
    <property type="evidence" value="ECO:0007669"/>
    <property type="project" value="UniProtKB-UniRule"/>
</dbReference>
<dbReference type="GO" id="GO:0003735">
    <property type="term" value="F:structural constituent of ribosome"/>
    <property type="evidence" value="ECO:0007669"/>
    <property type="project" value="InterPro"/>
</dbReference>
<dbReference type="GO" id="GO:0000049">
    <property type="term" value="F:tRNA binding"/>
    <property type="evidence" value="ECO:0007669"/>
    <property type="project" value="UniProtKB-UniRule"/>
</dbReference>
<dbReference type="GO" id="GO:0006412">
    <property type="term" value="P:translation"/>
    <property type="evidence" value="ECO:0007669"/>
    <property type="project" value="UniProtKB-UniRule"/>
</dbReference>
<dbReference type="FunFam" id="3.30.1440.10:FF:000001">
    <property type="entry name" value="50S ribosomal protein L5"/>
    <property type="match status" value="1"/>
</dbReference>
<dbReference type="Gene3D" id="3.30.1440.10">
    <property type="match status" value="1"/>
</dbReference>
<dbReference type="HAMAP" id="MF_01333_B">
    <property type="entry name" value="Ribosomal_uL5_B"/>
    <property type="match status" value="1"/>
</dbReference>
<dbReference type="InterPro" id="IPR002132">
    <property type="entry name" value="Ribosomal_uL5"/>
</dbReference>
<dbReference type="InterPro" id="IPR020930">
    <property type="entry name" value="Ribosomal_uL5_bac-type"/>
</dbReference>
<dbReference type="InterPro" id="IPR031309">
    <property type="entry name" value="Ribosomal_uL5_C"/>
</dbReference>
<dbReference type="InterPro" id="IPR020929">
    <property type="entry name" value="Ribosomal_uL5_CS"/>
</dbReference>
<dbReference type="InterPro" id="IPR022803">
    <property type="entry name" value="Ribosomal_uL5_dom_sf"/>
</dbReference>
<dbReference type="InterPro" id="IPR031310">
    <property type="entry name" value="Ribosomal_uL5_N"/>
</dbReference>
<dbReference type="NCBIfam" id="NF000585">
    <property type="entry name" value="PRK00010.1"/>
    <property type="match status" value="1"/>
</dbReference>
<dbReference type="PANTHER" id="PTHR11994">
    <property type="entry name" value="60S RIBOSOMAL PROTEIN L11-RELATED"/>
    <property type="match status" value="1"/>
</dbReference>
<dbReference type="Pfam" id="PF00281">
    <property type="entry name" value="Ribosomal_L5"/>
    <property type="match status" value="1"/>
</dbReference>
<dbReference type="Pfam" id="PF00673">
    <property type="entry name" value="Ribosomal_L5_C"/>
    <property type="match status" value="1"/>
</dbReference>
<dbReference type="PIRSF" id="PIRSF002161">
    <property type="entry name" value="Ribosomal_L5"/>
    <property type="match status" value="1"/>
</dbReference>
<dbReference type="SUPFAM" id="SSF55282">
    <property type="entry name" value="RL5-like"/>
    <property type="match status" value="1"/>
</dbReference>
<dbReference type="PROSITE" id="PS00358">
    <property type="entry name" value="RIBOSOMAL_L5"/>
    <property type="match status" value="1"/>
</dbReference>
<organism>
    <name type="scientific">Syntrophotalea carbinolica (strain DSM 2380 / NBRC 103641 / GraBd1)</name>
    <name type="common">Pelobacter carbinolicus</name>
    <dbReference type="NCBI Taxonomy" id="338963"/>
    <lineage>
        <taxon>Bacteria</taxon>
        <taxon>Pseudomonadati</taxon>
        <taxon>Thermodesulfobacteriota</taxon>
        <taxon>Desulfuromonadia</taxon>
        <taxon>Desulfuromonadales</taxon>
        <taxon>Syntrophotaleaceae</taxon>
        <taxon>Syntrophotalea</taxon>
    </lineage>
</organism>
<gene>
    <name evidence="1" type="primary">rplE</name>
    <name type="ordered locus">Pcar_0713</name>
</gene>